<keyword id="KW-1003">Cell membrane</keyword>
<keyword id="KW-0966">Cell projection</keyword>
<keyword id="KW-0968">Cytoplasmic vesicle</keyword>
<keyword id="KW-0449">Lipoprotein</keyword>
<keyword id="KW-0472">Membrane</keyword>
<keyword id="KW-0564">Palmitate</keyword>
<keyword id="KW-0597">Phosphoprotein</keyword>
<keyword id="KW-1185">Reference proteome</keyword>
<keyword id="KW-0812">Transmembrane</keyword>
<keyword id="KW-1133">Transmembrane helix</keyword>
<gene>
    <name type="primary">Scimp</name>
</gene>
<accession>Q3UU41</accession>
<accession>B2RVG2</accession>
<accession>Q5SX69</accession>
<reference key="1">
    <citation type="journal article" date="2005" name="Science">
        <title>The transcriptional landscape of the mammalian genome.</title>
        <authorList>
            <person name="Carninci P."/>
            <person name="Kasukawa T."/>
            <person name="Katayama S."/>
            <person name="Gough J."/>
            <person name="Frith M.C."/>
            <person name="Maeda N."/>
            <person name="Oyama R."/>
            <person name="Ravasi T."/>
            <person name="Lenhard B."/>
            <person name="Wells C."/>
            <person name="Kodzius R."/>
            <person name="Shimokawa K."/>
            <person name="Bajic V.B."/>
            <person name="Brenner S.E."/>
            <person name="Batalov S."/>
            <person name="Forrest A.R."/>
            <person name="Zavolan M."/>
            <person name="Davis M.J."/>
            <person name="Wilming L.G."/>
            <person name="Aidinis V."/>
            <person name="Allen J.E."/>
            <person name="Ambesi-Impiombato A."/>
            <person name="Apweiler R."/>
            <person name="Aturaliya R.N."/>
            <person name="Bailey T.L."/>
            <person name="Bansal M."/>
            <person name="Baxter L."/>
            <person name="Beisel K.W."/>
            <person name="Bersano T."/>
            <person name="Bono H."/>
            <person name="Chalk A.M."/>
            <person name="Chiu K.P."/>
            <person name="Choudhary V."/>
            <person name="Christoffels A."/>
            <person name="Clutterbuck D.R."/>
            <person name="Crowe M.L."/>
            <person name="Dalla E."/>
            <person name="Dalrymple B.P."/>
            <person name="de Bono B."/>
            <person name="Della Gatta G."/>
            <person name="di Bernardo D."/>
            <person name="Down T."/>
            <person name="Engstrom P."/>
            <person name="Fagiolini M."/>
            <person name="Faulkner G."/>
            <person name="Fletcher C.F."/>
            <person name="Fukushima T."/>
            <person name="Furuno M."/>
            <person name="Futaki S."/>
            <person name="Gariboldi M."/>
            <person name="Georgii-Hemming P."/>
            <person name="Gingeras T.R."/>
            <person name="Gojobori T."/>
            <person name="Green R.E."/>
            <person name="Gustincich S."/>
            <person name="Harbers M."/>
            <person name="Hayashi Y."/>
            <person name="Hensch T.K."/>
            <person name="Hirokawa N."/>
            <person name="Hill D."/>
            <person name="Huminiecki L."/>
            <person name="Iacono M."/>
            <person name="Ikeo K."/>
            <person name="Iwama A."/>
            <person name="Ishikawa T."/>
            <person name="Jakt M."/>
            <person name="Kanapin A."/>
            <person name="Katoh M."/>
            <person name="Kawasawa Y."/>
            <person name="Kelso J."/>
            <person name="Kitamura H."/>
            <person name="Kitano H."/>
            <person name="Kollias G."/>
            <person name="Krishnan S.P."/>
            <person name="Kruger A."/>
            <person name="Kummerfeld S.K."/>
            <person name="Kurochkin I.V."/>
            <person name="Lareau L.F."/>
            <person name="Lazarevic D."/>
            <person name="Lipovich L."/>
            <person name="Liu J."/>
            <person name="Liuni S."/>
            <person name="McWilliam S."/>
            <person name="Madan Babu M."/>
            <person name="Madera M."/>
            <person name="Marchionni L."/>
            <person name="Matsuda H."/>
            <person name="Matsuzawa S."/>
            <person name="Miki H."/>
            <person name="Mignone F."/>
            <person name="Miyake S."/>
            <person name="Morris K."/>
            <person name="Mottagui-Tabar S."/>
            <person name="Mulder N."/>
            <person name="Nakano N."/>
            <person name="Nakauchi H."/>
            <person name="Ng P."/>
            <person name="Nilsson R."/>
            <person name="Nishiguchi S."/>
            <person name="Nishikawa S."/>
            <person name="Nori F."/>
            <person name="Ohara O."/>
            <person name="Okazaki Y."/>
            <person name="Orlando V."/>
            <person name="Pang K.C."/>
            <person name="Pavan W.J."/>
            <person name="Pavesi G."/>
            <person name="Pesole G."/>
            <person name="Petrovsky N."/>
            <person name="Piazza S."/>
            <person name="Reed J."/>
            <person name="Reid J.F."/>
            <person name="Ring B.Z."/>
            <person name="Ringwald M."/>
            <person name="Rost B."/>
            <person name="Ruan Y."/>
            <person name="Salzberg S.L."/>
            <person name="Sandelin A."/>
            <person name="Schneider C."/>
            <person name="Schoenbach C."/>
            <person name="Sekiguchi K."/>
            <person name="Semple C.A."/>
            <person name="Seno S."/>
            <person name="Sessa L."/>
            <person name="Sheng Y."/>
            <person name="Shibata Y."/>
            <person name="Shimada H."/>
            <person name="Shimada K."/>
            <person name="Silva D."/>
            <person name="Sinclair B."/>
            <person name="Sperling S."/>
            <person name="Stupka E."/>
            <person name="Sugiura K."/>
            <person name="Sultana R."/>
            <person name="Takenaka Y."/>
            <person name="Taki K."/>
            <person name="Tammoja K."/>
            <person name="Tan S.L."/>
            <person name="Tang S."/>
            <person name="Taylor M.S."/>
            <person name="Tegner J."/>
            <person name="Teichmann S.A."/>
            <person name="Ueda H.R."/>
            <person name="van Nimwegen E."/>
            <person name="Verardo R."/>
            <person name="Wei C.L."/>
            <person name="Yagi K."/>
            <person name="Yamanishi H."/>
            <person name="Zabarovsky E."/>
            <person name="Zhu S."/>
            <person name="Zimmer A."/>
            <person name="Hide W."/>
            <person name="Bult C."/>
            <person name="Grimmond S.M."/>
            <person name="Teasdale R.D."/>
            <person name="Liu E.T."/>
            <person name="Brusic V."/>
            <person name="Quackenbush J."/>
            <person name="Wahlestedt C."/>
            <person name="Mattick J.S."/>
            <person name="Hume D.A."/>
            <person name="Kai C."/>
            <person name="Sasaki D."/>
            <person name="Tomaru Y."/>
            <person name="Fukuda S."/>
            <person name="Kanamori-Katayama M."/>
            <person name="Suzuki M."/>
            <person name="Aoki J."/>
            <person name="Arakawa T."/>
            <person name="Iida J."/>
            <person name="Imamura K."/>
            <person name="Itoh M."/>
            <person name="Kato T."/>
            <person name="Kawaji H."/>
            <person name="Kawagashira N."/>
            <person name="Kawashima T."/>
            <person name="Kojima M."/>
            <person name="Kondo S."/>
            <person name="Konno H."/>
            <person name="Nakano K."/>
            <person name="Ninomiya N."/>
            <person name="Nishio T."/>
            <person name="Okada M."/>
            <person name="Plessy C."/>
            <person name="Shibata K."/>
            <person name="Shiraki T."/>
            <person name="Suzuki S."/>
            <person name="Tagami M."/>
            <person name="Waki K."/>
            <person name="Watahiki A."/>
            <person name="Okamura-Oho Y."/>
            <person name="Suzuki H."/>
            <person name="Kawai J."/>
            <person name="Hayashizaki Y."/>
        </authorList>
    </citation>
    <scope>NUCLEOTIDE SEQUENCE [LARGE SCALE MRNA]</scope>
    <source>
        <strain>C57BL/6J</strain>
        <tissue>Thymus</tissue>
    </source>
</reference>
<reference key="2">
    <citation type="journal article" date="2009" name="PLoS Biol.">
        <title>Lineage-specific biology revealed by a finished genome assembly of the mouse.</title>
        <authorList>
            <person name="Church D.M."/>
            <person name="Goodstadt L."/>
            <person name="Hillier L.W."/>
            <person name="Zody M.C."/>
            <person name="Goldstein S."/>
            <person name="She X."/>
            <person name="Bult C.J."/>
            <person name="Agarwala R."/>
            <person name="Cherry J.L."/>
            <person name="DiCuccio M."/>
            <person name="Hlavina W."/>
            <person name="Kapustin Y."/>
            <person name="Meric P."/>
            <person name="Maglott D."/>
            <person name="Birtle Z."/>
            <person name="Marques A.C."/>
            <person name="Graves T."/>
            <person name="Zhou S."/>
            <person name="Teague B."/>
            <person name="Potamousis K."/>
            <person name="Churas C."/>
            <person name="Place M."/>
            <person name="Herschleb J."/>
            <person name="Runnheim R."/>
            <person name="Forrest D."/>
            <person name="Amos-Landgraf J."/>
            <person name="Schwartz D.C."/>
            <person name="Cheng Z."/>
            <person name="Lindblad-Toh K."/>
            <person name="Eichler E.E."/>
            <person name="Ponting C.P."/>
        </authorList>
    </citation>
    <scope>NUCLEOTIDE SEQUENCE [LARGE SCALE GENOMIC DNA]</scope>
    <source>
        <strain>C57BL/6J</strain>
    </source>
</reference>
<reference key="3">
    <citation type="journal article" date="2004" name="Genome Res.">
        <title>The status, quality, and expansion of the NIH full-length cDNA project: the Mammalian Gene Collection (MGC).</title>
        <authorList>
            <consortium name="The MGC Project Team"/>
        </authorList>
    </citation>
    <scope>NUCLEOTIDE SEQUENCE [LARGE SCALE MRNA]</scope>
    <source>
        <tissue>Brain</tissue>
    </source>
</reference>
<reference key="4">
    <citation type="journal article" date="2009" name="Immunity">
        <title>The phagosomal proteome in interferon-gamma-activated macrophages.</title>
        <authorList>
            <person name="Trost M."/>
            <person name="English L."/>
            <person name="Lemieux S."/>
            <person name="Courcelles M."/>
            <person name="Desjardins M."/>
            <person name="Thibault P."/>
        </authorList>
    </citation>
    <scope>PHOSPHORYLATION [LARGE SCALE ANALYSIS] AT SER-65; SER-77 AND TYR-120</scope>
    <scope>IDENTIFICATION BY MASS SPECTROMETRY [LARGE SCALE ANALYSIS]</scope>
</reference>
<reference key="5">
    <citation type="journal article" date="2010" name="Cell">
        <title>A tissue-specific atlas of mouse protein phosphorylation and expression.</title>
        <authorList>
            <person name="Huttlin E.L."/>
            <person name="Jedrychowski M.P."/>
            <person name="Elias J.E."/>
            <person name="Goswami T."/>
            <person name="Rad R."/>
            <person name="Beausoleil S.A."/>
            <person name="Villen J."/>
            <person name="Haas W."/>
            <person name="Sowa M.E."/>
            <person name="Gygi S.P."/>
        </authorList>
    </citation>
    <scope>IDENTIFICATION BY MASS SPECTROMETRY [LARGE SCALE ANALYSIS]</scope>
    <source>
        <tissue>Spleen</tissue>
    </source>
</reference>
<reference key="6">
    <citation type="journal article" date="2011" name="Mol. Cell. Biol.">
        <title>SCIMP, a transmembrane adapter protein involved in major histocompatibility complex class II signaling.</title>
        <authorList>
            <person name="Draber P."/>
            <person name="Vonkova I."/>
            <person name="Stepanek O."/>
            <person name="Hrdinka M."/>
            <person name="Kucova M."/>
            <person name="Skopcova T."/>
            <person name="Otahal P."/>
            <person name="Angelisova P."/>
            <person name="Horejsi V."/>
            <person name="Yeung M."/>
            <person name="Weiss A."/>
            <person name="Brdicka T."/>
        </authorList>
    </citation>
    <scope>INTERACTION WITH BLNK AND GRB2</scope>
    <scope>PHOSPHORYLATION</scope>
    <scope>TISSUE SPECIFICITY</scope>
</reference>
<reference key="7">
    <citation type="journal article" date="2016" name="J. Biol. Chem.">
        <title>The Transmembrane Adaptor Protein SCIMP Facilitates Sustained Dectin-1 Signaling in Dendritic Cells.</title>
        <authorList>
            <person name="Kralova J."/>
            <person name="Fabisik M."/>
            <person name="Pokorna J."/>
            <person name="Skopcova T."/>
            <person name="Malissen B."/>
            <person name="Brdicka T."/>
        </authorList>
    </citation>
    <scope>FUNCTION</scope>
    <scope>SUBCELLULAR LOCATION</scope>
    <scope>TISSUE SPECIFICITY</scope>
    <scope>INDUCTION</scope>
    <scope>PHOSPHORYLATION</scope>
    <scope>DISRUPTION PHENOTYPE</scope>
</reference>
<reference key="8">
    <citation type="journal article" date="2017" name="Immunol. Cell Biol.">
        <title>Development of SH2 probes and pull-down assays to detect pathogen-induced, site-specific tyrosine phosphorylation of the TLR adaptor SCIMP.</title>
        <authorList>
            <person name="Luo L."/>
            <person name="Tong S.J."/>
            <person name="Wall A.A."/>
            <person name="Khromykh T."/>
            <person name="Sweet M.J."/>
            <person name="Stow J.L."/>
        </authorList>
    </citation>
    <scope>FUNCTION</scope>
    <scope>INTERACTION WITH CSK; GRB2 AND BLNK</scope>
    <scope>PHOSPHORYLATION AT TYR-58; TYR-96 AND TYR-120</scope>
    <scope>MUTAGENESIS OF TYR-58; TYR-96 AND TYR-120</scope>
</reference>
<reference key="9">
    <citation type="journal article" date="2017" name="Nat. Commun.">
        <title>SCIMP is a transmembrane non-TIR TLR adaptor that promotes proinflammatory cytokine production from macrophages.</title>
        <authorList>
            <person name="Luo L."/>
            <person name="Bokil N.J."/>
            <person name="Wall A.A."/>
            <person name="Kapetanovic R."/>
            <person name="Lansdaal N.M."/>
            <person name="Marceline F."/>
            <person name="Burgess B.J."/>
            <person name="Tong S.J."/>
            <person name="Guo Z."/>
            <person name="Alexandrov K."/>
            <person name="Ross I.L."/>
            <person name="Hibbs M.L."/>
            <person name="Stow J.L."/>
            <person name="Sweet M.J."/>
        </authorList>
    </citation>
    <scope>FUNCTION</scope>
    <scope>SUBCELLULAR LOCATION</scope>
    <scope>INTERACTION WITH LYN; GRB2 AND TLR4</scope>
    <scope>TISSUE SPECIFICITY</scope>
    <scope>PHOSPHORYLATION AT TYR-96</scope>
    <scope>MUTAGENESIS OF TYR-58; TRP-95; TYR-96; SER-97; SER-98; VAL-99 AND TYR-120</scope>
</reference>
<dbReference type="EMBL" id="AK138818">
    <property type="protein sequence ID" value="BAE23788.1"/>
    <property type="molecule type" value="mRNA"/>
</dbReference>
<dbReference type="EMBL" id="AL596117">
    <property type="protein sequence ID" value="CAI25187.1"/>
    <property type="status" value="ALT_INIT"/>
    <property type="molecule type" value="Genomic_DNA"/>
</dbReference>
<dbReference type="EMBL" id="CR933735">
    <property type="protein sequence ID" value="CAM28154.1"/>
    <property type="status" value="ALT_INIT"/>
    <property type="molecule type" value="Genomic_DNA"/>
</dbReference>
<dbReference type="EMBL" id="BC147177">
    <property type="protein sequence ID" value="AAI47178.1"/>
    <property type="molecule type" value="mRNA"/>
</dbReference>
<dbReference type="EMBL" id="BC147178">
    <property type="protein sequence ID" value="AAI47179.1"/>
    <property type="molecule type" value="mRNA"/>
</dbReference>
<dbReference type="CCDS" id="CCDS24967.1"/>
<dbReference type="RefSeq" id="NP_001038991.1">
    <property type="nucleotide sequence ID" value="NM_001045526.2"/>
</dbReference>
<dbReference type="SMR" id="Q3UU41"/>
<dbReference type="CORUM" id="Q3UU41"/>
<dbReference type="FunCoup" id="Q3UU41">
    <property type="interactions" value="71"/>
</dbReference>
<dbReference type="IntAct" id="Q3UU41">
    <property type="interactions" value="2"/>
</dbReference>
<dbReference type="STRING" id="10090.ENSMUSP00000104174"/>
<dbReference type="iPTMnet" id="Q3UU41"/>
<dbReference type="PhosphoSitePlus" id="Q3UU41"/>
<dbReference type="SwissPalm" id="Q3UU41"/>
<dbReference type="PaxDb" id="10090-ENSMUSP00000104174"/>
<dbReference type="ProteomicsDB" id="253410"/>
<dbReference type="Antibodypedia" id="1618">
    <property type="antibodies" value="86 antibodies from 16 providers"/>
</dbReference>
<dbReference type="Ensembl" id="ENSMUST00000108534.9">
    <property type="protein sequence ID" value="ENSMUSP00000104174.3"/>
    <property type="gene ID" value="ENSMUSG00000057135.13"/>
</dbReference>
<dbReference type="GeneID" id="327957"/>
<dbReference type="KEGG" id="mmu:327957"/>
<dbReference type="UCSC" id="uc007jwp.1">
    <property type="organism name" value="mouse"/>
</dbReference>
<dbReference type="AGR" id="MGI:3610314"/>
<dbReference type="CTD" id="388325"/>
<dbReference type="MGI" id="MGI:3610314">
    <property type="gene designation" value="Scimp"/>
</dbReference>
<dbReference type="VEuPathDB" id="HostDB:ENSMUSG00000057135"/>
<dbReference type="eggNOG" id="ENOG502T3K5">
    <property type="taxonomic scope" value="Eukaryota"/>
</dbReference>
<dbReference type="GeneTree" id="ENSGT00390000007003"/>
<dbReference type="HOGENOM" id="CLU_1781827_0_0_1"/>
<dbReference type="InParanoid" id="Q3UU41"/>
<dbReference type="OMA" id="NYFWIIL"/>
<dbReference type="OrthoDB" id="9835673at2759"/>
<dbReference type="PhylomeDB" id="Q3UU41"/>
<dbReference type="TreeFam" id="TF340362"/>
<dbReference type="BioGRID-ORCS" id="327957">
    <property type="hits" value="1 hit in 77 CRISPR screens"/>
</dbReference>
<dbReference type="ChiTaRS" id="Scimp">
    <property type="organism name" value="mouse"/>
</dbReference>
<dbReference type="PRO" id="PR:Q3UU41"/>
<dbReference type="Proteomes" id="UP000000589">
    <property type="component" value="Chromosome 11"/>
</dbReference>
<dbReference type="RNAct" id="Q3UU41">
    <property type="molecule type" value="protein"/>
</dbReference>
<dbReference type="Bgee" id="ENSMUSG00000057135">
    <property type="expression patterns" value="Expressed in spleen and 30 other cell types or tissues"/>
</dbReference>
<dbReference type="ExpressionAtlas" id="Q3UU41">
    <property type="expression patterns" value="baseline and differential"/>
</dbReference>
<dbReference type="GO" id="GO:0030175">
    <property type="term" value="C:filopodium"/>
    <property type="evidence" value="ECO:0007669"/>
    <property type="project" value="UniProtKB-SubCell"/>
</dbReference>
<dbReference type="GO" id="GO:0001772">
    <property type="term" value="C:immunological synapse"/>
    <property type="evidence" value="ECO:0000250"/>
    <property type="project" value="UniProtKB"/>
</dbReference>
<dbReference type="GO" id="GO:0031256">
    <property type="term" value="C:leading edge membrane"/>
    <property type="evidence" value="ECO:0000250"/>
    <property type="project" value="UniProtKB"/>
</dbReference>
<dbReference type="GO" id="GO:0016020">
    <property type="term" value="C:membrane"/>
    <property type="evidence" value="ECO:0000250"/>
    <property type="project" value="UniProtKB"/>
</dbReference>
<dbReference type="GO" id="GO:0045335">
    <property type="term" value="C:phagocytic vesicle"/>
    <property type="evidence" value="ECO:0000315"/>
    <property type="project" value="UniProtKB"/>
</dbReference>
<dbReference type="GO" id="GO:0043235">
    <property type="term" value="C:receptor complex"/>
    <property type="evidence" value="ECO:0000314"/>
    <property type="project" value="UniProtKB"/>
</dbReference>
<dbReference type="GO" id="GO:0001726">
    <property type="term" value="C:ruffle"/>
    <property type="evidence" value="ECO:0007669"/>
    <property type="project" value="UniProtKB-SubCell"/>
</dbReference>
<dbReference type="GO" id="GO:0097197">
    <property type="term" value="C:tetraspanin-enriched microdomain"/>
    <property type="evidence" value="ECO:0000250"/>
    <property type="project" value="UniProtKB"/>
</dbReference>
<dbReference type="GO" id="GO:0031259">
    <property type="term" value="C:uropod membrane"/>
    <property type="evidence" value="ECO:0000250"/>
    <property type="project" value="UniProtKB"/>
</dbReference>
<dbReference type="GO" id="GO:0060090">
    <property type="term" value="F:molecular adaptor activity"/>
    <property type="evidence" value="ECO:0000315"/>
    <property type="project" value="UniProtKB"/>
</dbReference>
<dbReference type="GO" id="GO:0071226">
    <property type="term" value="P:cellular response to molecule of fungal origin"/>
    <property type="evidence" value="ECO:0000315"/>
    <property type="project" value="UniProtKB"/>
</dbReference>
<dbReference type="GO" id="GO:0002720">
    <property type="term" value="P:positive regulation of cytokine production involved in immune response"/>
    <property type="evidence" value="ECO:0000315"/>
    <property type="project" value="UniProtKB"/>
</dbReference>
<dbReference type="GO" id="GO:0002732">
    <property type="term" value="P:positive regulation of dendritic cell cytokine production"/>
    <property type="evidence" value="ECO:0000315"/>
    <property type="project" value="UniProtKB"/>
</dbReference>
<dbReference type="GO" id="GO:0070374">
    <property type="term" value="P:positive regulation of ERK1 and ERK2 cascade"/>
    <property type="evidence" value="ECO:0000315"/>
    <property type="project" value="UniProtKB"/>
</dbReference>
<dbReference type="GO" id="GO:0032735">
    <property type="term" value="P:positive regulation of interleukin-12 production"/>
    <property type="evidence" value="ECO:0000315"/>
    <property type="project" value="UniProtKB"/>
</dbReference>
<dbReference type="GO" id="GO:0032755">
    <property type="term" value="P:positive regulation of interleukin-6 production"/>
    <property type="evidence" value="ECO:0000315"/>
    <property type="project" value="UniProtKB"/>
</dbReference>
<dbReference type="GO" id="GO:0031666">
    <property type="term" value="P:positive regulation of lipopolysaccharide-mediated signaling pathway"/>
    <property type="evidence" value="ECO:0000314"/>
    <property type="project" value="UniProtKB"/>
</dbReference>
<dbReference type="GO" id="GO:0032874">
    <property type="term" value="P:positive regulation of stress-activated MAPK cascade"/>
    <property type="evidence" value="ECO:0000315"/>
    <property type="project" value="UniProtKB"/>
</dbReference>
<dbReference type="GO" id="GO:0034138">
    <property type="term" value="P:toll-like receptor 3 signaling pathway"/>
    <property type="evidence" value="ECO:0000315"/>
    <property type="project" value="UniProtKB"/>
</dbReference>
<dbReference type="GO" id="GO:0034142">
    <property type="term" value="P:toll-like receptor 4 signaling pathway"/>
    <property type="evidence" value="ECO:0000315"/>
    <property type="project" value="UniProtKB"/>
</dbReference>
<dbReference type="GO" id="GO:0034154">
    <property type="term" value="P:toll-like receptor 7 signaling pathway"/>
    <property type="evidence" value="ECO:0000315"/>
    <property type="project" value="UniProtKB"/>
</dbReference>
<dbReference type="GO" id="GO:0038123">
    <property type="term" value="P:toll-like receptor TLR1:TLR2 signaling pathway"/>
    <property type="evidence" value="ECO:0000315"/>
    <property type="project" value="UniProtKB"/>
</dbReference>
<dbReference type="InterPro" id="IPR052133">
    <property type="entry name" value="Immune_Signaling-Apoptosis_Reg"/>
</dbReference>
<dbReference type="InterPro" id="IPR028181">
    <property type="entry name" value="SCIMP"/>
</dbReference>
<dbReference type="PANTHER" id="PTHR12044">
    <property type="entry name" value="BCL2 INTERACTING MEDIATOR OF CELL DEATH"/>
    <property type="match status" value="1"/>
</dbReference>
<dbReference type="PANTHER" id="PTHR12044:SF11">
    <property type="entry name" value="SLP ADAPTER AND CSK-INTERACTING MEMBRANE PROTEIN"/>
    <property type="match status" value="1"/>
</dbReference>
<dbReference type="Pfam" id="PF15050">
    <property type="entry name" value="SCIMP"/>
    <property type="match status" value="1"/>
</dbReference>
<comment type="function">
    <text evidence="1 5 6 7">Lipid tetraspanin-associated transmembrane adapter/mediator that acts as a scaffold for Src-family kinases and other signaling proteins in immune cells (PubMed:27288407, PubMed:28098138, PubMed:28290451). It is involved in major histocompatibility complex class II (MHC-II) signaling transduction in B cells, where it is required in generating the calcium response and enhancing ERK activity upon MHC-II stimulation (By similarity). In dendritic cells, it is involved in sustaining CLEC7A/DECTIN1 signaling after CLEC7A activation by fungal beta-glucans (PubMed:27288407). It also acts as an agonist-inducible signaling adapter for TLR1, TLR2, TLR3, TLR4, and TLR7 by selectively enabling the expression of pro-inflammatory cytokines IL6 and IL12B in macrophages and acting as a scaffold for phosphorylation of Toll-like receptors by Src-family kinases (PubMed:28098138).</text>
</comment>
<comment type="subunit">
    <text evidence="1 4 6 7">Interacts with CD37, CD53 and CD81 (By similarity). Interacts (via proline-rich region) with LYN (via SH3 domain) (PubMed:28098138). Interacts with CSK (via SH2 domain); this interaction is dependent on phosphorylation of Tyr-96 (PubMed:28290451). Interacts with BLNK (via SH2 domain); this interaction is dependent on phosphorylation of Tyr-120 (PubMed:21930792, PubMed:28290451). Interacts with GRB2 (via SH2 domain); this interaction may be dependent on phosphorylation of Tyr-58 (PubMed:21930792, PubMed:28098138). Interacts with TLR4; this interaction occurs upon lipopolysaccharide activation of TLR4 and is enhanced by phosphorylation of Tyr-96 by LYN (PubMed:28098138). This interaction facilitates the phosphorylation of TLR4 by LYN which elicits a selective cytokine response in macrophages (PubMed:28098138).</text>
</comment>
<comment type="subcellular location">
    <subcellularLocation>
        <location evidence="6">Cell membrane</location>
        <topology evidence="2">Single-pass membrane protein</topology>
    </subcellularLocation>
    <subcellularLocation>
        <location evidence="1">Cell membrane</location>
        <topology evidence="1">Lipid-anchor</topology>
    </subcellularLocation>
    <subcellularLocation>
        <location evidence="5">Cytoplasmic vesicle</location>
        <location evidence="5">Phagosome</location>
    </subcellularLocation>
    <subcellularLocation>
        <location evidence="6">Cell projection</location>
        <location evidence="6">Ruffle</location>
    </subcellularLocation>
    <subcellularLocation>
        <location evidence="6">Cell projection</location>
        <location evidence="6">Filopodium</location>
    </subcellularLocation>
    <text evidence="1 5">Together with MHC-II, associates with lipid-enriched microdomains called tetraspanin-enriched microdomains (TEMs) (By similarity). Rapidly translocates into immunological synapse (IS) at cell-cell contacts between antigen-presenting cells (APCs) and T-cells (By similarity). Colocalized with tetraspanins CD37, CD53, and CD81 at the uropod (By similarity). Present at regions of cell-cell contacts but also at the leading edge of migrating cells (By similarity). Localizes to phagosomes in dendritic cells after exposure to particulate beta-glucan (PubMed:27288407).</text>
</comment>
<comment type="tissue specificity">
    <text evidence="4 5 6">Expressed in peripheral blood leukocytes (PBLs) (at protein level) (PubMed:21930792). Expressed in dendritic cells, splenocytes and B cells (at protein level) (PubMed:27288407). Strongly expressed in the spleen and lymph nodes and weakly in other tissues of the immune system, including bone marrow, peripheral blood leukocytes (PBLs) and thymus (PubMed:21930792). Not detected in the majority of nonimmune tissues, with the exception of lung (PubMed:21930792). Expressed in antigen-presenting cells (PubMed:21930792). Expressed in macrophages (PubMed:28098138).</text>
</comment>
<comment type="induction">
    <text evidence="5">Induced in bone marrow-derived macrophages by CSF2 and particulate beta-glucan.</text>
</comment>
<comment type="PTM">
    <text evidence="4 5 6 7">Phosphorylated by the Src-family protein tyrosine kinases LYN and SRC (PubMed:27288407). Phosphorylation occurs on tyrosine residues upon MHC-II stimulation (PubMed:21930792, PubMed:27288407). Phosphorylation also occurs on tyrosine residues after activation of CLEC7A/DECTIN1 by particulate beta-glucan (PubMed:27288407). Lipopolysaccharide (LPS) induces phosphorylation of Tyr-58, Tyr-96 and Tyr-120 differentially to allow temporal recruitment of effector proteins GRB2, CSK and BLNK (PubMed:28290451). Phosphorylation of Tyr-58 is immediately induced by LPS stimulation and allows GRB2 to bind (PubMed:28290451). Tyr-96 is phosphorylated 5 minutes after LPS stimulation, which then allows CSK to bind, followed by phosphorylation of Tyr-120 10 minutes after LPS induction, which allows BLNK to bind (PubMed:28290451). Phosphorylation at Tyr-96 by LYN occurs after activation of TLR4 by LPS; phosphorylation enhances binding to TLR4 (PubMed:28098138, PubMed:28290451).</text>
</comment>
<comment type="PTM">
    <text evidence="1">Palmitoylated.</text>
</comment>
<comment type="disruption phenotype">
    <text evidence="5">Mice exhibit no difference in leukocyte development and subset representation in lymphoid organs (PubMed:27288407). No effect on B cell mediated activation of antigen-specific T cells and MHCII glycoprotein downstream signaling in B cells (PubMed:27288407). In dendritic cells, mutants show decreased cytokine production beyond 24 hours after stimulation of CLEC7A signaling (PubMed:27288407).</text>
</comment>
<comment type="sequence caution" evidence="8">
    <conflict type="erroneous initiation">
        <sequence resource="EMBL-CDS" id="CAI25187"/>
    </conflict>
    <text>Truncated N-terminus.</text>
</comment>
<comment type="sequence caution" evidence="8">
    <conflict type="erroneous initiation">
        <sequence resource="EMBL-CDS" id="CAM28154"/>
    </conflict>
    <text>Truncated N-terminus.</text>
</comment>
<proteinExistence type="evidence at protein level"/>
<sequence length="150" mass="17140">MSWWRDNFWIILAMSIIFISLVLGLILYCVCRWQLRQGRNWEIAKPSKQDGRDEEKMYENVLNSSPGQLPALPPRGSPFPGDLAPQEAPRQPSAWYSSVKKVRNKKVFAISGSTEPENDYDDVEIPATTETQHSKTTPFWQAEVGLHSSF</sequence>
<feature type="chain" id="PRO_0000295238" description="SLP adapter and CSK-interacting membrane protein">
    <location>
        <begin position="1"/>
        <end position="150"/>
    </location>
</feature>
<feature type="transmembrane region" description="Helical" evidence="2">
    <location>
        <begin position="8"/>
        <end position="28"/>
    </location>
</feature>
<feature type="region of interest" description="Disordered" evidence="3">
    <location>
        <begin position="63"/>
        <end position="94"/>
    </location>
</feature>
<feature type="region of interest" description="Proline-rich region necessary for constitutive interaction with LYN" evidence="6">
    <location>
        <begin position="70"/>
        <end position="75"/>
    </location>
</feature>
<feature type="region of interest" description="Interaction with TLR4" evidence="6">
    <location>
        <begin position="93"/>
        <end position="150"/>
    </location>
</feature>
<feature type="region of interest" description="Disordered" evidence="3">
    <location>
        <begin position="110"/>
        <end position="136"/>
    </location>
</feature>
<feature type="modified residue" description="Phosphotyrosine" evidence="7">
    <location>
        <position position="58"/>
    </location>
</feature>
<feature type="modified residue" description="Phosphoserine" evidence="9">
    <location>
        <position position="65"/>
    </location>
</feature>
<feature type="modified residue" description="Phosphoserine" evidence="9">
    <location>
        <position position="77"/>
    </location>
</feature>
<feature type="modified residue" description="Phosphotyrosine; by LYN" evidence="6 7">
    <location>
        <position position="96"/>
    </location>
</feature>
<feature type="modified residue" description="Phosphotyrosine" evidence="7 9">
    <location>
        <position position="120"/>
    </location>
</feature>
<feature type="lipid moiety-binding region" description="S-palmitoyl cysteine" evidence="1">
    <location>
        <position position="29"/>
    </location>
</feature>
<feature type="lipid moiety-binding region" description="S-palmitoyl cysteine" evidence="1">
    <location>
        <position position="31"/>
    </location>
</feature>
<feature type="mutagenesis site" description="Inhibits interaction with BLNK. Slightly inhibits interaction with GRB2. No effect on interactions with TLR4 and CSK." evidence="6 7">
    <original>Y</original>
    <variation>F</variation>
    <location>
        <position position="58"/>
    </location>
</feature>
<feature type="mutagenesis site" description="Inhibits interaction with TLR4. Inhibits IL12B expression after TLR4 activation by lipopolysaccharide. No effect on interaction with LYN." evidence="6">
    <original>W</original>
    <variation>A</variation>
    <location>
        <position position="95"/>
    </location>
</feature>
<feature type="mutagenesis site" description="Inhibits interaction with TLR4. Decreases IL12B expression after TLR4 activation by lipopolysaccharide. Inhibits interaction with CSK. No effect on interactions with LYN, GRB2, and BLNK." evidence="6 7">
    <original>Y</original>
    <variation>F</variation>
    <location>
        <position position="96"/>
    </location>
</feature>
<feature type="mutagenesis site" description="No effect on interaction with TLR4." evidence="6">
    <original>S</original>
    <variation>A</variation>
    <location>
        <position position="97"/>
    </location>
</feature>
<feature type="mutagenesis site" description="No effect on interaction with TLR4." evidence="6">
    <original>S</original>
    <variation>A</variation>
    <location>
        <position position="98"/>
    </location>
</feature>
<feature type="mutagenesis site" description="No effect on interaction with TLR4." evidence="6">
    <original>V</original>
    <variation>A</variation>
    <location>
        <position position="99"/>
    </location>
</feature>
<feature type="mutagenesis site" description="Inhibits interaction with BLNK. No effect on interactions with TLR4, GRB2 and CSK." evidence="6 7">
    <original>Y</original>
    <variation>F</variation>
    <location>
        <position position="120"/>
    </location>
</feature>
<name>SCIMP_MOUSE</name>
<organism>
    <name type="scientific">Mus musculus</name>
    <name type="common">Mouse</name>
    <dbReference type="NCBI Taxonomy" id="10090"/>
    <lineage>
        <taxon>Eukaryota</taxon>
        <taxon>Metazoa</taxon>
        <taxon>Chordata</taxon>
        <taxon>Craniata</taxon>
        <taxon>Vertebrata</taxon>
        <taxon>Euteleostomi</taxon>
        <taxon>Mammalia</taxon>
        <taxon>Eutheria</taxon>
        <taxon>Euarchontoglires</taxon>
        <taxon>Glires</taxon>
        <taxon>Rodentia</taxon>
        <taxon>Myomorpha</taxon>
        <taxon>Muroidea</taxon>
        <taxon>Muridae</taxon>
        <taxon>Murinae</taxon>
        <taxon>Mus</taxon>
        <taxon>Mus</taxon>
    </lineage>
</organism>
<protein>
    <recommendedName>
        <fullName>SLP adapter and CSK-interacting membrane protein</fullName>
    </recommendedName>
</protein>
<evidence type="ECO:0000250" key="1">
    <source>
        <dbReference type="UniProtKB" id="Q6UWF3"/>
    </source>
</evidence>
<evidence type="ECO:0000255" key="2"/>
<evidence type="ECO:0000256" key="3">
    <source>
        <dbReference type="SAM" id="MobiDB-lite"/>
    </source>
</evidence>
<evidence type="ECO:0000269" key="4">
    <source>
    </source>
</evidence>
<evidence type="ECO:0000269" key="5">
    <source>
    </source>
</evidence>
<evidence type="ECO:0000269" key="6">
    <source>
    </source>
</evidence>
<evidence type="ECO:0000269" key="7">
    <source>
    </source>
</evidence>
<evidence type="ECO:0000305" key="8"/>
<evidence type="ECO:0007744" key="9">
    <source>
    </source>
</evidence>